<proteinExistence type="evidence at protein level"/>
<dbReference type="EMBL" id="AL590442">
    <property type="protein sequence ID" value="CAD25079.1"/>
    <property type="molecule type" value="Genomic_DNA"/>
</dbReference>
<dbReference type="RefSeq" id="NP_584575.1">
    <property type="nucleotide sequence ID" value="NM_001040764.1"/>
</dbReference>
<dbReference type="SMR" id="Q8SSH5"/>
<dbReference type="FunCoup" id="Q8SSH5">
    <property type="interactions" value="334"/>
</dbReference>
<dbReference type="STRING" id="284813.Q8SSH5"/>
<dbReference type="GeneID" id="858565"/>
<dbReference type="KEGG" id="ecu:ECU02_0480"/>
<dbReference type="VEuPathDB" id="MicrosporidiaDB:ECU02_0480"/>
<dbReference type="HOGENOM" id="CLU_019837_0_0_1"/>
<dbReference type="InParanoid" id="Q8SSH5"/>
<dbReference type="OMA" id="INYYNIC"/>
<dbReference type="OrthoDB" id="2196194at2759"/>
<dbReference type="Proteomes" id="UP000000819">
    <property type="component" value="Chromosome II"/>
</dbReference>
<dbReference type="GO" id="GO:0005634">
    <property type="term" value="C:nucleus"/>
    <property type="evidence" value="ECO:0007669"/>
    <property type="project" value="UniProtKB-SubCell"/>
</dbReference>
<dbReference type="GO" id="GO:0008540">
    <property type="term" value="C:proteasome regulatory particle, base subcomplex"/>
    <property type="evidence" value="ECO:0007669"/>
    <property type="project" value="TreeGrafter"/>
</dbReference>
<dbReference type="GO" id="GO:0034515">
    <property type="term" value="C:proteasome storage granule"/>
    <property type="evidence" value="ECO:0007669"/>
    <property type="project" value="TreeGrafter"/>
</dbReference>
<dbReference type="GO" id="GO:0030234">
    <property type="term" value="F:enzyme regulator activity"/>
    <property type="evidence" value="ECO:0007669"/>
    <property type="project" value="InterPro"/>
</dbReference>
<dbReference type="GO" id="GO:0043161">
    <property type="term" value="P:proteasome-mediated ubiquitin-dependent protein catabolic process"/>
    <property type="evidence" value="ECO:0007669"/>
    <property type="project" value="TreeGrafter"/>
</dbReference>
<dbReference type="GO" id="GO:0042176">
    <property type="term" value="P:regulation of protein catabolic process"/>
    <property type="evidence" value="ECO:0007669"/>
    <property type="project" value="InterPro"/>
</dbReference>
<dbReference type="Gene3D" id="1.25.10.10">
    <property type="entry name" value="Leucine-rich Repeat Variant"/>
    <property type="match status" value="1"/>
</dbReference>
<dbReference type="InterPro" id="IPR016642">
    <property type="entry name" value="26S_Psome_Rpn2"/>
</dbReference>
<dbReference type="InterPro" id="IPR011989">
    <property type="entry name" value="ARM-like"/>
</dbReference>
<dbReference type="InterPro" id="IPR016024">
    <property type="entry name" value="ARM-type_fold"/>
</dbReference>
<dbReference type="PANTHER" id="PTHR10943">
    <property type="entry name" value="26S PROTEASOME NON-ATPASE REGULATORY SUBUNIT"/>
    <property type="match status" value="1"/>
</dbReference>
<dbReference type="PANTHER" id="PTHR10943:SF2">
    <property type="entry name" value="26S PROTEASOME NON-ATPASE REGULATORY SUBUNIT 1"/>
    <property type="match status" value="1"/>
</dbReference>
<dbReference type="Pfam" id="PF13646">
    <property type="entry name" value="HEAT_2"/>
    <property type="match status" value="1"/>
</dbReference>
<dbReference type="PIRSF" id="PIRSF015947">
    <property type="entry name" value="26S_Psome_Rpn2"/>
    <property type="match status" value="1"/>
</dbReference>
<dbReference type="SUPFAM" id="SSF48371">
    <property type="entry name" value="ARM repeat"/>
    <property type="match status" value="1"/>
</dbReference>
<sequence>MQTIRILPNIRALLRDGRESEAIDVINAHVDVVAPHIKDDLRYIKSSDPKTSLCLSKIYFVLEDYQQAIEYALRAGDLLVDDGSFYYTSIVYHMMDSADIGGDDRIRDFVLKVIGAEDVDDSLIGYLFSIKAYGLLKEALVKYISDGNDCRRLLDLLISLGEEEGCLKEIYGMLAEIGPGKKPFIFYVIDAYFYLEDVEKVKALIERLVKEDILLCYDVAFYTEDNYSPEIEVADQRVMSILSGEFKKKILGAFLLEKNLTSFKFLESIARTRTHYLGLANSLMNLGTSNDTLYRNNADIFGQSSEWAKFSEVASIGMIHLFNSNPYEILKNYLPSEVSQKEGGALMALGLIKAGTFSEEDTEYLLYFLDTEDTLTPELAYGVCLGLGLINMGSANREILNKLKELSKVDRTLLVEASVYGMGMLGLNSWSVELLEDLRTIAGETEFERVKRAVGISFSLVLMFSEEMFYDECNASNGDFKNYINELLYDKDSIMRANGVLSLGSAFVGTGRLGVISTLLPYINDGDDDVKRAAVIAIGLVCCDDRDLLVGTLEPLSENHNFFVRAAVAVVLGLFLSGTGDKVCTNILEALMYDTNSLVRQSACIGVGFITMQCNPELVPNYKRIIEKLNRLIVDKKESGAVELGAVLGRGLSEGGGRNIVFSVRNMSGITSADRIAGAVLFLHYWYWHPLISMVSLCALPTTVFCFNEDLEEEEIEIPTSSRYNNLLICLPDIKKARRFKQKPKEDKEIVIESPSVLTFGSRCTIKQREECGIDAPAILFVKKKK</sequence>
<protein>
    <recommendedName>
        <fullName>26S proteasome regulatory subunit RPN2</fullName>
    </recommendedName>
</protein>
<reference key="1">
    <citation type="journal article" date="2001" name="Nature">
        <title>Genome sequence and gene compaction of the eukaryote parasite Encephalitozoon cuniculi.</title>
        <authorList>
            <person name="Katinka M.D."/>
            <person name="Duprat S."/>
            <person name="Cornillot E."/>
            <person name="Metenier G."/>
            <person name="Thomarat F."/>
            <person name="Prensier G."/>
            <person name="Barbe V."/>
            <person name="Peyretaillade E."/>
            <person name="Brottier P."/>
            <person name="Wincker P."/>
            <person name="Delbac F."/>
            <person name="El Alaoui H."/>
            <person name="Peyret P."/>
            <person name="Saurin W."/>
            <person name="Gouy M."/>
            <person name="Weissenbach J."/>
            <person name="Vivares C.P."/>
        </authorList>
    </citation>
    <scope>NUCLEOTIDE SEQUENCE [LARGE SCALE GENOMIC DNA]</scope>
    <source>
        <strain>GB-M1</strain>
    </source>
</reference>
<reference key="2">
    <citation type="journal article" date="2006" name="Proteomics">
        <title>Proteomic analysis of the eukaryotic parasite Encephalitozoon cuniculi (microsporidia): a reference map for proteins expressed in late sporogonial stages.</title>
        <authorList>
            <person name="Brosson D."/>
            <person name="Kuhn L."/>
            <person name="Delbac F."/>
            <person name="Garin J."/>
            <person name="Vivares C.P."/>
            <person name="Texier C."/>
        </authorList>
    </citation>
    <scope>IDENTIFICATION BY MASS SPECTROMETRY [LARGE SCALE ANALYSIS]</scope>
    <scope>DEVELOPMENTAL STAGE</scope>
</reference>
<feature type="chain" id="PRO_0000382762" description="26S proteasome regulatory subunit RPN2">
    <location>
        <begin position="1"/>
        <end position="786"/>
    </location>
</feature>
<feature type="repeat" description="PC 1">
    <location>
        <begin position="311"/>
        <end position="343"/>
    </location>
</feature>
<feature type="repeat" description="PC 2">
    <location>
        <begin position="344"/>
        <end position="377"/>
    </location>
</feature>
<feature type="repeat" description="PC 3">
    <location>
        <begin position="382"/>
        <end position="416"/>
    </location>
</feature>
<feature type="repeat" description="PC 4">
    <location>
        <begin position="417"/>
        <end position="451"/>
    </location>
</feature>
<feature type="repeat" description="PC 5">
    <location>
        <begin position="498"/>
        <end position="532"/>
    </location>
</feature>
<feature type="repeat" description="PC 6">
    <location>
        <begin position="533"/>
        <end position="566"/>
    </location>
</feature>
<feature type="repeat" description="PC 7">
    <location>
        <begin position="567"/>
        <end position="601"/>
    </location>
</feature>
<evidence type="ECO:0000250" key="1"/>
<evidence type="ECO:0000269" key="2">
    <source>
    </source>
</evidence>
<evidence type="ECO:0000305" key="3"/>
<accession>Q8SSH5</accession>
<keyword id="KW-0963">Cytoplasm</keyword>
<keyword id="KW-0539">Nucleus</keyword>
<keyword id="KW-0647">Proteasome</keyword>
<keyword id="KW-1185">Reference proteome</keyword>
<keyword id="KW-0677">Repeat</keyword>
<comment type="function">
    <text evidence="1">Acts as a regulatory subunit of the 26S proteasome which degrades poly-ubiquitinated proteins in the cytoplasm and in the nucleus. It is essential for the regulated turnover of proteins and for the removal of misfolded proteins. The proteasome is a multicatalytic proteinase complex that is characterized by its ability to cleave peptides with Arg, Phe, Tyr, Leu, and Glu adjacent to the leaving group at neutral or slightly basic pH (By similarity).</text>
</comment>
<comment type="subunit">
    <text evidence="1">The 26S proteasome consists of a 20S proteasome core and two 19S regulatory subunits. The 20S proteasome core is composed of 28 subunits that are arranged in four stacked rings, resulting in a barrel-shaped structure. The two end rings are each formed by seven alpha subunits, and the two central rings are each formed by seven beta subunits. The catalytic chamber with the active sites is on the inside of the barrel (By similarity).</text>
</comment>
<comment type="subcellular location">
    <subcellularLocation>
        <location evidence="1">Cytoplasm</location>
    </subcellularLocation>
    <subcellularLocation>
        <location evidence="1">Nucleus</location>
    </subcellularLocation>
</comment>
<comment type="developmental stage">
    <text evidence="2">Expressed in late sporogonial stages.</text>
</comment>
<comment type="similarity">
    <text evidence="3">Belongs to the proteasome subunit S1 family.</text>
</comment>
<name>RPN2_ENCCU</name>
<gene>
    <name type="primary">RPN2</name>
    <name type="ordered locus">ECU02_0480</name>
</gene>
<organism>
    <name type="scientific">Encephalitozoon cuniculi (strain GB-M1)</name>
    <name type="common">Microsporidian parasite</name>
    <dbReference type="NCBI Taxonomy" id="284813"/>
    <lineage>
        <taxon>Eukaryota</taxon>
        <taxon>Fungi</taxon>
        <taxon>Fungi incertae sedis</taxon>
        <taxon>Microsporidia</taxon>
        <taxon>Unikaryonidae</taxon>
        <taxon>Encephalitozoon</taxon>
    </lineage>
</organism>